<reference key="1">
    <citation type="journal article" date="2005" name="Science">
        <title>The transcriptional landscape of the mammalian genome.</title>
        <authorList>
            <person name="Carninci P."/>
            <person name="Kasukawa T."/>
            <person name="Katayama S."/>
            <person name="Gough J."/>
            <person name="Frith M.C."/>
            <person name="Maeda N."/>
            <person name="Oyama R."/>
            <person name="Ravasi T."/>
            <person name="Lenhard B."/>
            <person name="Wells C."/>
            <person name="Kodzius R."/>
            <person name="Shimokawa K."/>
            <person name="Bajic V.B."/>
            <person name="Brenner S.E."/>
            <person name="Batalov S."/>
            <person name="Forrest A.R."/>
            <person name="Zavolan M."/>
            <person name="Davis M.J."/>
            <person name="Wilming L.G."/>
            <person name="Aidinis V."/>
            <person name="Allen J.E."/>
            <person name="Ambesi-Impiombato A."/>
            <person name="Apweiler R."/>
            <person name="Aturaliya R.N."/>
            <person name="Bailey T.L."/>
            <person name="Bansal M."/>
            <person name="Baxter L."/>
            <person name="Beisel K.W."/>
            <person name="Bersano T."/>
            <person name="Bono H."/>
            <person name="Chalk A.M."/>
            <person name="Chiu K.P."/>
            <person name="Choudhary V."/>
            <person name="Christoffels A."/>
            <person name="Clutterbuck D.R."/>
            <person name="Crowe M.L."/>
            <person name="Dalla E."/>
            <person name="Dalrymple B.P."/>
            <person name="de Bono B."/>
            <person name="Della Gatta G."/>
            <person name="di Bernardo D."/>
            <person name="Down T."/>
            <person name="Engstrom P."/>
            <person name="Fagiolini M."/>
            <person name="Faulkner G."/>
            <person name="Fletcher C.F."/>
            <person name="Fukushima T."/>
            <person name="Furuno M."/>
            <person name="Futaki S."/>
            <person name="Gariboldi M."/>
            <person name="Georgii-Hemming P."/>
            <person name="Gingeras T.R."/>
            <person name="Gojobori T."/>
            <person name="Green R.E."/>
            <person name="Gustincich S."/>
            <person name="Harbers M."/>
            <person name="Hayashi Y."/>
            <person name="Hensch T.K."/>
            <person name="Hirokawa N."/>
            <person name="Hill D."/>
            <person name="Huminiecki L."/>
            <person name="Iacono M."/>
            <person name="Ikeo K."/>
            <person name="Iwama A."/>
            <person name="Ishikawa T."/>
            <person name="Jakt M."/>
            <person name="Kanapin A."/>
            <person name="Katoh M."/>
            <person name="Kawasawa Y."/>
            <person name="Kelso J."/>
            <person name="Kitamura H."/>
            <person name="Kitano H."/>
            <person name="Kollias G."/>
            <person name="Krishnan S.P."/>
            <person name="Kruger A."/>
            <person name="Kummerfeld S.K."/>
            <person name="Kurochkin I.V."/>
            <person name="Lareau L.F."/>
            <person name="Lazarevic D."/>
            <person name="Lipovich L."/>
            <person name="Liu J."/>
            <person name="Liuni S."/>
            <person name="McWilliam S."/>
            <person name="Madan Babu M."/>
            <person name="Madera M."/>
            <person name="Marchionni L."/>
            <person name="Matsuda H."/>
            <person name="Matsuzawa S."/>
            <person name="Miki H."/>
            <person name="Mignone F."/>
            <person name="Miyake S."/>
            <person name="Morris K."/>
            <person name="Mottagui-Tabar S."/>
            <person name="Mulder N."/>
            <person name="Nakano N."/>
            <person name="Nakauchi H."/>
            <person name="Ng P."/>
            <person name="Nilsson R."/>
            <person name="Nishiguchi S."/>
            <person name="Nishikawa S."/>
            <person name="Nori F."/>
            <person name="Ohara O."/>
            <person name="Okazaki Y."/>
            <person name="Orlando V."/>
            <person name="Pang K.C."/>
            <person name="Pavan W.J."/>
            <person name="Pavesi G."/>
            <person name="Pesole G."/>
            <person name="Petrovsky N."/>
            <person name="Piazza S."/>
            <person name="Reed J."/>
            <person name="Reid J.F."/>
            <person name="Ring B.Z."/>
            <person name="Ringwald M."/>
            <person name="Rost B."/>
            <person name="Ruan Y."/>
            <person name="Salzberg S.L."/>
            <person name="Sandelin A."/>
            <person name="Schneider C."/>
            <person name="Schoenbach C."/>
            <person name="Sekiguchi K."/>
            <person name="Semple C.A."/>
            <person name="Seno S."/>
            <person name="Sessa L."/>
            <person name="Sheng Y."/>
            <person name="Shibata Y."/>
            <person name="Shimada H."/>
            <person name="Shimada K."/>
            <person name="Silva D."/>
            <person name="Sinclair B."/>
            <person name="Sperling S."/>
            <person name="Stupka E."/>
            <person name="Sugiura K."/>
            <person name="Sultana R."/>
            <person name="Takenaka Y."/>
            <person name="Taki K."/>
            <person name="Tammoja K."/>
            <person name="Tan S.L."/>
            <person name="Tang S."/>
            <person name="Taylor M.S."/>
            <person name="Tegner J."/>
            <person name="Teichmann S.A."/>
            <person name="Ueda H.R."/>
            <person name="van Nimwegen E."/>
            <person name="Verardo R."/>
            <person name="Wei C.L."/>
            <person name="Yagi K."/>
            <person name="Yamanishi H."/>
            <person name="Zabarovsky E."/>
            <person name="Zhu S."/>
            <person name="Zimmer A."/>
            <person name="Hide W."/>
            <person name="Bult C."/>
            <person name="Grimmond S.M."/>
            <person name="Teasdale R.D."/>
            <person name="Liu E.T."/>
            <person name="Brusic V."/>
            <person name="Quackenbush J."/>
            <person name="Wahlestedt C."/>
            <person name="Mattick J.S."/>
            <person name="Hume D.A."/>
            <person name="Kai C."/>
            <person name="Sasaki D."/>
            <person name="Tomaru Y."/>
            <person name="Fukuda S."/>
            <person name="Kanamori-Katayama M."/>
            <person name="Suzuki M."/>
            <person name="Aoki J."/>
            <person name="Arakawa T."/>
            <person name="Iida J."/>
            <person name="Imamura K."/>
            <person name="Itoh M."/>
            <person name="Kato T."/>
            <person name="Kawaji H."/>
            <person name="Kawagashira N."/>
            <person name="Kawashima T."/>
            <person name="Kojima M."/>
            <person name="Kondo S."/>
            <person name="Konno H."/>
            <person name="Nakano K."/>
            <person name="Ninomiya N."/>
            <person name="Nishio T."/>
            <person name="Okada M."/>
            <person name="Plessy C."/>
            <person name="Shibata K."/>
            <person name="Shiraki T."/>
            <person name="Suzuki S."/>
            <person name="Tagami M."/>
            <person name="Waki K."/>
            <person name="Watahiki A."/>
            <person name="Okamura-Oho Y."/>
            <person name="Suzuki H."/>
            <person name="Kawai J."/>
            <person name="Hayashizaki Y."/>
        </authorList>
    </citation>
    <scope>NUCLEOTIDE SEQUENCE [LARGE SCALE MRNA]</scope>
    <source>
        <strain>C57BL/6J</strain>
        <tissue>Heart</tissue>
    </source>
</reference>
<reference key="2">
    <citation type="submission" date="2005-07" db="EMBL/GenBank/DDBJ databases">
        <authorList>
            <person name="Mural R.J."/>
            <person name="Adams M.D."/>
            <person name="Myers E.W."/>
            <person name="Smith H.O."/>
            <person name="Venter J.C."/>
        </authorList>
    </citation>
    <scope>NUCLEOTIDE SEQUENCE [LARGE SCALE GENOMIC DNA]</scope>
</reference>
<reference key="3">
    <citation type="journal article" date="2004" name="Genome Res.">
        <title>The status, quality, and expansion of the NIH full-length cDNA project: the Mammalian Gene Collection (MGC).</title>
        <authorList>
            <consortium name="The MGC Project Team"/>
        </authorList>
    </citation>
    <scope>NUCLEOTIDE SEQUENCE [LARGE SCALE MRNA]</scope>
    <source>
        <tissue>Testis</tissue>
    </source>
</reference>
<reference key="4">
    <citation type="journal article" date="2008" name="NeuroReport">
        <title>GRINL1A colocalizes with N-methyl D-aspartate receptor NR1 subunit and reduces N-methyl D-aspartate toxicity.</title>
        <authorList>
            <person name="Roginski R.S."/>
            <person name="Goubaeva F."/>
            <person name="Mikami M."/>
            <person name="Fried-Cassorla E."/>
            <person name="Nair M.R."/>
            <person name="Yang J."/>
        </authorList>
    </citation>
    <scope>INTERACTION WITH GRIN1</scope>
</reference>
<reference key="5">
    <citation type="journal article" date="2010" name="Cell">
        <title>A tissue-specific atlas of mouse protein phosphorylation and expression.</title>
        <authorList>
            <person name="Huttlin E.L."/>
            <person name="Jedrychowski M.P."/>
            <person name="Elias J.E."/>
            <person name="Goswami T."/>
            <person name="Rad R."/>
            <person name="Beausoleil S.A."/>
            <person name="Villen J."/>
            <person name="Haas W."/>
            <person name="Sowa M.E."/>
            <person name="Gygi S.P."/>
        </authorList>
    </citation>
    <scope>IDENTIFICATION BY MASS SPECTROMETRY [LARGE SCALE ANALYSIS]</scope>
    <source>
        <tissue>Lung</tissue>
    </source>
</reference>
<reference key="6">
    <citation type="journal article" date="2010" name="Circ. Res.">
        <title>Myozap, a novel intercalated disc protein, activates serum response factor-dependent signaling and is required to maintain cardiac function in vivo.</title>
        <authorList>
            <person name="Seeger T.S."/>
            <person name="Frank D."/>
            <person name="Rohr C."/>
            <person name="Will R."/>
            <person name="Just S."/>
            <person name="Grund C."/>
            <person name="Lyon R."/>
            <person name="Luedde M."/>
            <person name="Koegl M."/>
            <person name="Sheikh F."/>
            <person name="Rottbauer W."/>
            <person name="Franke W.W."/>
            <person name="Katus H.A."/>
            <person name="Olson E.N."/>
            <person name="Frey N."/>
        </authorList>
    </citation>
    <scope>FUNCTION</scope>
    <scope>INTERACTION WITH DSP; MPRIP AND TJP1</scope>
    <scope>SUBCELLULAR LOCATION</scope>
    <scope>TISSUE SPECIFICITY</scope>
    <scope>DEVELOPMENTAL STAGE</scope>
</reference>
<keyword id="KW-0965">Cell junction</keyword>
<keyword id="KW-1003">Cell membrane</keyword>
<keyword id="KW-0175">Coiled coil</keyword>
<keyword id="KW-0963">Cytoplasm</keyword>
<keyword id="KW-0206">Cytoskeleton</keyword>
<keyword id="KW-0472">Membrane</keyword>
<keyword id="KW-1185">Reference proteome</keyword>
<keyword id="KW-0732">Signal</keyword>
<sequence length="466" mass="53897">MLRSTSTVTLFSGGGAKSPGTPSRRANVCRLRLTVPPENPVPQQTEKKIERKDQPPELSNGESTKRLPQGVVYGVVRRSDPNQQKEMVVYGWSTNQLKEEMNYIKDVRATLEKVRKRMYGDYDEMRQKIRQLTQDLSVSHAQQDYLDSHIQAQASALDSFNAMNAALASDSVGLQKTLVDVTLENSHIKDQIRHLQQTYEASMDKLREKQRQLEAAQMENQLLKMRVESSQEANAEVMREMTRKLYSQYEEKLQEAQRKHSAEKEVLLEETNSFLKAIEEANKKMEAAELSLEEKDQKIGELDRLIERMEKERHQLQLQLLEHETEMSGEMADSDKNRYQQLEEASASLRERIRHLDDMVHCQQKKVKQMVEEIESLKKKVQQKQLLILQLLEKISFLEGENNELQSRLDYLTETQPKTEVETREIGVGCDLLPSPTGRTREITMPSRSYTPYTRVLELSSKKTLT</sequence>
<feature type="signal peptide" evidence="3">
    <location>
        <begin position="1"/>
        <end position="16"/>
    </location>
</feature>
<feature type="chain" id="PRO_0000326226" description="Myocardial zonula adherens protein">
    <location>
        <begin position="17"/>
        <end position="466"/>
    </location>
</feature>
<feature type="region of interest" description="Disordered" evidence="4">
    <location>
        <begin position="1"/>
        <end position="68"/>
    </location>
</feature>
<feature type="coiled-coil region" evidence="3">
    <location>
        <begin position="95"/>
        <end position="137"/>
    </location>
</feature>
<feature type="coiled-coil region" evidence="3">
    <location>
        <begin position="187"/>
        <end position="415"/>
    </location>
</feature>
<feature type="compositionally biased region" description="Polar residues" evidence="4">
    <location>
        <begin position="1"/>
        <end position="10"/>
    </location>
</feature>
<feature type="compositionally biased region" description="Basic and acidic residues" evidence="4">
    <location>
        <begin position="45"/>
        <end position="55"/>
    </location>
</feature>
<organism>
    <name type="scientific">Mus musculus</name>
    <name type="common">Mouse</name>
    <dbReference type="NCBI Taxonomy" id="10090"/>
    <lineage>
        <taxon>Eukaryota</taxon>
        <taxon>Metazoa</taxon>
        <taxon>Chordata</taxon>
        <taxon>Craniata</taxon>
        <taxon>Vertebrata</taxon>
        <taxon>Euteleostomi</taxon>
        <taxon>Mammalia</taxon>
        <taxon>Eutheria</taxon>
        <taxon>Euarchontoglires</taxon>
        <taxon>Glires</taxon>
        <taxon>Rodentia</taxon>
        <taxon>Myomorpha</taxon>
        <taxon>Muroidea</taxon>
        <taxon>Muridae</taxon>
        <taxon>Murinae</taxon>
        <taxon>Mus</taxon>
        <taxon>Mus</taxon>
    </lineage>
</organism>
<dbReference type="EMBL" id="AK146889">
    <property type="protein sequence ID" value="BAE27507.1"/>
    <property type="molecule type" value="mRNA"/>
</dbReference>
<dbReference type="EMBL" id="CH466522">
    <property type="protein sequence ID" value="EDL26227.1"/>
    <property type="molecule type" value="Genomic_DNA"/>
</dbReference>
<dbReference type="EMBL" id="BC139077">
    <property type="protein sequence ID" value="AAI39078.1"/>
    <property type="molecule type" value="mRNA"/>
</dbReference>
<dbReference type="EMBL" id="BC139078">
    <property type="protein sequence ID" value="AAI39079.1"/>
    <property type="molecule type" value="mRNA"/>
</dbReference>
<dbReference type="CCDS" id="CCDS23327.1"/>
<dbReference type="RefSeq" id="NP_001028380.1">
    <property type="nucleotide sequence ID" value="NM_001033208.4"/>
</dbReference>
<dbReference type="SMR" id="Q3UIJ9"/>
<dbReference type="FunCoup" id="Q3UIJ9">
    <property type="interactions" value="28"/>
</dbReference>
<dbReference type="STRING" id="10090.ENSMUSP00000091342"/>
<dbReference type="GlyGen" id="Q3UIJ9">
    <property type="glycosylation" value="1 site"/>
</dbReference>
<dbReference type="iPTMnet" id="Q3UIJ9"/>
<dbReference type="PhosphoSitePlus" id="Q3UIJ9"/>
<dbReference type="PaxDb" id="10090-ENSMUSP00000091342"/>
<dbReference type="ProteomicsDB" id="287551"/>
<dbReference type="Ensembl" id="ENSMUST00000093823.8">
    <property type="protein sequence ID" value="ENSMUSP00000091342.2"/>
    <property type="gene ID" value="ENSMUSG00000041361.15"/>
</dbReference>
<dbReference type="GeneID" id="102371"/>
<dbReference type="KEGG" id="mmu:102371"/>
<dbReference type="UCSC" id="uc009qpa.1">
    <property type="organism name" value="mouse"/>
</dbReference>
<dbReference type="AGR" id="MGI:2142908"/>
<dbReference type="CTD" id="100820829"/>
<dbReference type="MGI" id="MGI:2142908">
    <property type="gene designation" value="Myzap"/>
</dbReference>
<dbReference type="VEuPathDB" id="HostDB:ENSMUSG00000041361"/>
<dbReference type="eggNOG" id="ENOG502QSEE">
    <property type="taxonomic scope" value="Eukaryota"/>
</dbReference>
<dbReference type="GeneTree" id="ENSGT00950000183065"/>
<dbReference type="HOGENOM" id="CLU_022112_0_0_1"/>
<dbReference type="InParanoid" id="Q3UIJ9"/>
<dbReference type="OMA" id="CMGMEKS"/>
<dbReference type="OrthoDB" id="72745at9989"/>
<dbReference type="PhylomeDB" id="Q3UIJ9"/>
<dbReference type="TreeFam" id="TF331627"/>
<dbReference type="BioGRID-ORCS" id="102371">
    <property type="hits" value="1 hit in 77 CRISPR screens"/>
</dbReference>
<dbReference type="ChiTaRS" id="Myzap">
    <property type="organism name" value="mouse"/>
</dbReference>
<dbReference type="PRO" id="PR:Q3UIJ9"/>
<dbReference type="Proteomes" id="UP000000589">
    <property type="component" value="Chromosome 9"/>
</dbReference>
<dbReference type="RNAct" id="Q3UIJ9">
    <property type="molecule type" value="protein"/>
</dbReference>
<dbReference type="Bgee" id="ENSMUSG00000041361">
    <property type="expression patterns" value="Expressed in myocardium of ventricle and 197 other cell types or tissues"/>
</dbReference>
<dbReference type="ExpressionAtlas" id="Q3UIJ9">
    <property type="expression patterns" value="baseline and differential"/>
</dbReference>
<dbReference type="GO" id="GO:0070161">
    <property type="term" value="C:anchoring junction"/>
    <property type="evidence" value="ECO:0007669"/>
    <property type="project" value="UniProtKB-SubCell"/>
</dbReference>
<dbReference type="GO" id="GO:0009898">
    <property type="term" value="C:cytoplasmic side of plasma membrane"/>
    <property type="evidence" value="ECO:0000314"/>
    <property type="project" value="UniProtKB"/>
</dbReference>
<dbReference type="GO" id="GO:0005856">
    <property type="term" value="C:cytoskeleton"/>
    <property type="evidence" value="ECO:0007669"/>
    <property type="project" value="UniProtKB-SubCell"/>
</dbReference>
<dbReference type="GO" id="GO:0031674">
    <property type="term" value="C:I band"/>
    <property type="evidence" value="ECO:0000314"/>
    <property type="project" value="UniProtKB"/>
</dbReference>
<dbReference type="GO" id="GO:0030018">
    <property type="term" value="C:Z disc"/>
    <property type="evidence" value="ECO:0007669"/>
    <property type="project" value="UniProtKB-SubCell"/>
</dbReference>
<dbReference type="GO" id="GO:0035556">
    <property type="term" value="P:intracellular signal transduction"/>
    <property type="evidence" value="ECO:0000314"/>
    <property type="project" value="UniProtKB"/>
</dbReference>
<dbReference type="InterPro" id="IPR051375">
    <property type="entry name" value="Tuftelin_GRINL1A/MYZAP/CCD68"/>
</dbReference>
<dbReference type="PANTHER" id="PTHR23171">
    <property type="entry name" value="GDOWN1"/>
    <property type="match status" value="1"/>
</dbReference>
<dbReference type="PANTHER" id="PTHR23171:SF2">
    <property type="entry name" value="MYOCARDIAL ZONULA ADHERENS PROTEIN"/>
    <property type="match status" value="1"/>
</dbReference>
<protein>
    <recommendedName>
        <fullName>Myocardial zonula adherens protein</fullName>
    </recommendedName>
</protein>
<accession>Q3UIJ9</accession>
<accession>B2RT00</accession>
<proteinExistence type="evidence at protein level"/>
<name>MYZAP_MOUSE</name>
<comment type="function">
    <text evidence="1 5">Plays a role in cellular signaling via Rho-related GTP-binding proteins and activation of transcription factor SRF. Targets TJP1 to cell junctions (By similarity). In cortical neurons, may play a role in glutaminergic signal transduction through interaction with the NMDA receptor subunit GRIN1 (By similarity).</text>
</comment>
<comment type="subunit">
    <text evidence="1">Interacts with DSP, MPRIP and TJP1/ZO1. Interaction with MPRIP inhibits the activation of transcription factor SRF. Interacts with GRIN1. Interacts with DYNLL1 (By similarity).</text>
</comment>
<comment type="subcellular location">
    <subcellularLocation>
        <location evidence="5">Cytoplasm</location>
        <location evidence="5">Cytoskeleton</location>
    </subcellularLocation>
    <subcellularLocation>
        <location evidence="5">Cell membrane</location>
        <topology evidence="5">Peripheral membrane protein</topology>
        <orientation evidence="5">Cytoplasmic side</orientation>
    </subcellularLocation>
    <subcellularLocation>
        <location evidence="5">Cytoplasm</location>
        <location evidence="5">Myofibril</location>
        <location evidence="5">Sarcomere</location>
        <location evidence="5">I band</location>
    </subcellularLocation>
    <subcellularLocation>
        <location evidence="5">Cytoplasm</location>
        <location evidence="5">Myofibril</location>
        <location evidence="5">Sarcomere</location>
        <location evidence="5">Z line</location>
    </subcellularLocation>
    <subcellularLocation>
        <location evidence="2">Cell junction</location>
    </subcellularLocation>
    <text>Detected predominantly at the intercalated disk in cardiomyocytes, and at low levels on sarcomeric Z disks. Colocalizes with F-actin. Colocalizes with cortical actin.</text>
</comment>
<comment type="tissue specificity">
    <text evidence="5">Detected in heart myocardium and lung.</text>
</comment>
<comment type="developmental stage">
    <text evidence="5">Detected in embryonic vasculature at 8 dpc. Detected in endocardium and the primitive ventricle at 9 dpc. First detected in myocardium at 11.5 dpc. Highly expressed in heart and lung at 15.5 dpc and in neonates, wherease expression in vasculature is no longer detectable.</text>
</comment>
<comment type="similarity">
    <text evidence="6">Belongs to the MYZAP family.</text>
</comment>
<evidence type="ECO:0000250" key="1"/>
<evidence type="ECO:0000250" key="2">
    <source>
        <dbReference type="UniProtKB" id="P0CAP1"/>
    </source>
</evidence>
<evidence type="ECO:0000255" key="3"/>
<evidence type="ECO:0000256" key="4">
    <source>
        <dbReference type="SAM" id="MobiDB-lite"/>
    </source>
</evidence>
<evidence type="ECO:0000269" key="5">
    <source>
    </source>
</evidence>
<evidence type="ECO:0000305" key="6"/>
<gene>
    <name type="primary">Myzap</name>
    <name type="synonym">Myozap</name>
</gene>